<name>ST_POVBK</name>
<organismHost>
    <name type="scientific">Homo sapiens</name>
    <name type="common">Human</name>
    <dbReference type="NCBI Taxonomy" id="9606"/>
</organismHost>
<sequence>MDKVLNREESMELMDLLGLERAAWGNLPLMRKAYLRKCKEFHPDKGGDEDKMKRMNTLYKKMEQDVKVAHQPDFGTWSSSEVCADFPLCPDTLYCKEWPICSKKPSVHCPCMLCQLRLRHLNRKFLRKEPLVWIDCYCIDCFTQWFGLDLTEETLQWWVQIIGETPFRDLKL</sequence>
<organism>
    <name type="scientific">BK polyomavirus</name>
    <name type="common">BKPyV</name>
    <name type="synonym">Human polyomavirus 1</name>
    <dbReference type="NCBI Taxonomy" id="1891762"/>
    <lineage>
        <taxon>Viruses</taxon>
        <taxon>Monodnaviria</taxon>
        <taxon>Shotokuvirae</taxon>
        <taxon>Cossaviricota</taxon>
        <taxon>Papovaviricetes</taxon>
        <taxon>Sepolyvirales</taxon>
        <taxon>Polyomaviridae</taxon>
        <taxon>Betapolyomavirus</taxon>
    </lineage>
</organism>
<accession>P03082</accession>
<comment type="function">
    <text evidence="1">Promotes efficient viral genome replication by accelerating both G1 and S phase progression of the cell cycle. Inhibits host PP2A by binding to the A subunit, thereby displacing lower affinity regulatory B subunit. Inactivation of PP2A in turn results in the transactivation of cyclin A and cyclin D1 promoters. Late during the infection cycle, ST may induce dephosphorylation of host MTOR, leading to the inhibition of cap-dependent translation. May establish and maintain high levels of viral genomes during persistent infection in cell culture.</text>
</comment>
<comment type="subunit">
    <text evidence="1">Interacts with host PPP2R1A; the interaction inhibits PP2A activity.</text>
</comment>
<comment type="subcellular location">
    <subcellularLocation>
        <location>Host cytoplasm</location>
    </subcellularLocation>
    <subcellularLocation>
        <location evidence="1">Host nucleus</location>
    </subcellularLocation>
</comment>
<comment type="alternative products">
    <event type="alternative splicing"/>
    <isoform>
        <id>P03082-1</id>
        <name>Small t antigen</name>
        <sequence type="displayed"/>
    </isoform>
    <isoform>
        <id>P03071-1</id>
        <name>Large T antigen</name>
        <sequence type="external"/>
    </isoform>
</comment>
<comment type="domain">
    <text evidence="1">The common region of ST and LT proteins comprises the J domain. This domain is essential for multiple viral activities, including virion assembly, viral DNA replication, transformation and transcriptional activation. This domain is also required for cyclin A-transactivating activity of ST.</text>
</comment>
<comment type="miscellaneous">
    <text>The strain Dunlop sequence is shown.</text>
</comment>
<feature type="chain" id="PRO_0000115053" description="Small t antigen">
    <location>
        <begin position="1"/>
        <end position="172"/>
    </location>
</feature>
<feature type="domain" description="J" evidence="2">
    <location>
        <begin position="12"/>
        <end position="75"/>
    </location>
</feature>
<feature type="zinc finger region" description="C4-type; atypical">
    <location>
        <begin position="101"/>
        <end position="114"/>
    </location>
</feature>
<feature type="zinc finger region" description="H1C3-type; atypical">
    <location>
        <begin position="120"/>
        <end position="141"/>
    </location>
</feature>
<feature type="modified residue" description="N-acetylmethionine; by host" evidence="1">
    <location>
        <position position="1"/>
    </location>
</feature>
<feature type="sequence variant" description="In strain: MM.">
    <location>
        <position position="34"/>
    </location>
</feature>
<feature type="sequence variant" description="In strain: MM.">
    <original>IC</original>
    <variation>MP</variation>
    <location>
        <begin position="100"/>
        <end position="101"/>
    </location>
</feature>
<feature type="sequence variant" description="In strain: MM.">
    <location>
        <begin position="102"/>
        <end position="172"/>
    </location>
</feature>
<proteinExistence type="inferred from homology"/>
<dbReference type="EMBL" id="V01110">
    <property type="protein sequence ID" value="CAA24308.1"/>
    <property type="molecule type" value="Genomic_DNA"/>
</dbReference>
<dbReference type="EMBL" id="V01108">
    <property type="protein sequence ID" value="CAA24301.1"/>
    <property type="molecule type" value="Genomic_DNA"/>
</dbReference>
<dbReference type="EMBL" id="V01109">
    <property type="protein sequence ID" value="CAA24303.1"/>
    <property type="molecule type" value="Genomic_DNA"/>
</dbReference>
<dbReference type="EMBL" id="M37730">
    <property type="protein sequence ID" value="AAA47141.1"/>
    <property type="molecule type" value="Genomic_DNA"/>
</dbReference>
<dbReference type="EMBL" id="M37731">
    <property type="protein sequence ID" value="AAA47144.1"/>
    <property type="molecule type" value="Genomic_DNA"/>
</dbReference>
<dbReference type="PIR" id="D03632">
    <property type="entry name" value="TVVPAB"/>
</dbReference>
<dbReference type="RefSeq" id="YP_717941.1">
    <molecule id="P03082-1"/>
    <property type="nucleotide sequence ID" value="NC_001538.1"/>
</dbReference>
<dbReference type="SMR" id="P03082"/>
<dbReference type="DNASU" id="29031012"/>
<dbReference type="GeneID" id="29031012"/>
<dbReference type="KEGG" id="vg:29031012"/>
<dbReference type="OrthoDB" id="14669at10239"/>
<dbReference type="Proteomes" id="UP000008475">
    <property type="component" value="Genome"/>
</dbReference>
<dbReference type="Proteomes" id="UP000008990">
    <property type="component" value="Genome"/>
</dbReference>
<dbReference type="GO" id="GO:0030430">
    <property type="term" value="C:host cell cytoplasm"/>
    <property type="evidence" value="ECO:0007669"/>
    <property type="project" value="UniProtKB-SubCell"/>
</dbReference>
<dbReference type="GO" id="GO:0042025">
    <property type="term" value="C:host cell nucleus"/>
    <property type="evidence" value="ECO:0007669"/>
    <property type="project" value="UniProtKB-SubCell"/>
</dbReference>
<dbReference type="GO" id="GO:0008270">
    <property type="term" value="F:zinc ion binding"/>
    <property type="evidence" value="ECO:0007669"/>
    <property type="project" value="UniProtKB-KW"/>
</dbReference>
<dbReference type="CDD" id="cd06257">
    <property type="entry name" value="DnaJ"/>
    <property type="match status" value="1"/>
</dbReference>
<dbReference type="FunFam" id="1.10.287.110:FF:000161">
    <property type="entry name" value="Small t antigen"/>
    <property type="match status" value="1"/>
</dbReference>
<dbReference type="Gene3D" id="1.10.287.110">
    <property type="entry name" value="DnaJ domain"/>
    <property type="match status" value="1"/>
</dbReference>
<dbReference type="Gene3D" id="1.20.120.1860">
    <property type="entry name" value="Small t-antigen, unique domain"/>
    <property type="match status" value="1"/>
</dbReference>
<dbReference type="InterPro" id="IPR001623">
    <property type="entry name" value="DnaJ_domain"/>
</dbReference>
<dbReference type="InterPro" id="IPR036869">
    <property type="entry name" value="J_dom_sf"/>
</dbReference>
<dbReference type="InterPro" id="IPR003354">
    <property type="entry name" value="Papo_T_antigen"/>
</dbReference>
<dbReference type="InterPro" id="IPR036092">
    <property type="entry name" value="Papo_T_antigensf"/>
</dbReference>
<dbReference type="Pfam" id="PF02380">
    <property type="entry name" value="Papo_T_antigen"/>
    <property type="match status" value="1"/>
</dbReference>
<dbReference type="SMART" id="SM00271">
    <property type="entry name" value="DnaJ"/>
    <property type="match status" value="1"/>
</dbReference>
<dbReference type="SUPFAM" id="SSF46565">
    <property type="entry name" value="Chaperone J-domain"/>
    <property type="match status" value="1"/>
</dbReference>
<dbReference type="SUPFAM" id="SSF161240">
    <property type="entry name" value="T-antigen specific domain-like"/>
    <property type="match status" value="1"/>
</dbReference>
<dbReference type="PROSITE" id="PS50076">
    <property type="entry name" value="DNAJ_2"/>
    <property type="match status" value="1"/>
</dbReference>
<reference key="1">
    <citation type="journal article" date="1979" name="Cell">
        <title>The genome of human papovavirus BKV.</title>
        <authorList>
            <person name="Seif I."/>
            <person name="Khoury G."/>
            <person name="Dhar R."/>
        </authorList>
    </citation>
    <scope>NUCLEOTIDE SEQUENCE [GENOMIC DNA]</scope>
    <source>
        <strain>Dunlop</strain>
    </source>
</reference>
<reference key="2">
    <citation type="journal article" date="1979" name="Science">
        <title>BK virus DNA: complete nucleotide sequence of a human tumor virus.</title>
        <authorList>
            <person name="Yang R.C.A."/>
            <person name="Wu R."/>
        </authorList>
    </citation>
    <scope>NUCLEOTIDE SEQUENCE [GENOMIC DNA]</scope>
    <source>
        <strain>MM</strain>
    </source>
</reference>
<reference key="3">
    <citation type="journal article" date="1980" name="J. Virol.">
        <title>BK virus DNA sequence coding for the t and T antigens and evaluation of methods for determining sequence homology.</title>
        <authorList>
            <person name="Yang R.C.A."/>
            <person name="Young A."/>
            <person name="Wu R."/>
        </authorList>
    </citation>
    <scope>NUCLEOTIDE SEQUENCE [GENOMIC DNA]</scope>
    <source>
        <strain>MM</strain>
    </source>
</reference>
<reference key="4">
    <citation type="journal article" date="1979" name="Nucleic Acids Res.">
        <title>Comparative study of papovavirus DNA: BKV(MM), BKV(WT) and SV40.</title>
        <authorList>
            <person name="Yang R.C.A."/>
            <person name="Wu R."/>
        </authorList>
    </citation>
    <scope>NUCLEOTIDE SEQUENCE [GENOMIC DNA]</scope>
    <source>
        <strain>MM</strain>
    </source>
</reference>
<keyword id="KW-0007">Acetylation</keyword>
<keyword id="KW-0010">Activator</keyword>
<keyword id="KW-0025">Alternative splicing</keyword>
<keyword id="KW-0244">Early protein</keyword>
<keyword id="KW-1035">Host cytoplasm</keyword>
<keyword id="KW-1048">Host nucleus</keyword>
<keyword id="KW-0945">Host-virus interaction</keyword>
<keyword id="KW-0479">Metal-binding</keyword>
<keyword id="KW-0553">Oncogene</keyword>
<keyword id="KW-0597">Phosphoprotein</keyword>
<keyword id="KW-0804">Transcription</keyword>
<keyword id="KW-0805">Transcription regulation</keyword>
<keyword id="KW-0862">Zinc</keyword>
<keyword id="KW-0863">Zinc-finger</keyword>
<evidence type="ECO:0000250" key="1">
    <source>
        <dbReference type="UniProtKB" id="P03081"/>
    </source>
</evidence>
<evidence type="ECO:0000255" key="2">
    <source>
        <dbReference type="PROSITE-ProRule" id="PRU00286"/>
    </source>
</evidence>
<protein>
    <recommendedName>
        <fullName>Small t antigen</fullName>
        <shortName>ST</shortName>
        <shortName>ST-AG</shortName>
    </recommendedName>
</protein>